<sequence length="88" mass="9792">MAFAQSGGAGGGGGQRRPFFRRRKTCPFSGPNAPKIDYKDVRLLQRYISERGKIVPSRITAVSAKKQRELSAAIKRSRFLGLLPFVIR</sequence>
<gene>
    <name evidence="1" type="primary">rpsR</name>
    <name type="ordered locus">Xaut_3119</name>
</gene>
<proteinExistence type="inferred from homology"/>
<protein>
    <recommendedName>
        <fullName evidence="1">Small ribosomal subunit protein bS18</fullName>
    </recommendedName>
    <alternativeName>
        <fullName evidence="3">30S ribosomal protein S18</fullName>
    </alternativeName>
</protein>
<comment type="function">
    <text evidence="1">Binds as a heterodimer with protein bS6 to the central domain of the 16S rRNA, where it helps stabilize the platform of the 30S subunit.</text>
</comment>
<comment type="subunit">
    <text evidence="1">Part of the 30S ribosomal subunit. Forms a tight heterodimer with protein bS6.</text>
</comment>
<comment type="similarity">
    <text evidence="1">Belongs to the bacterial ribosomal protein bS18 family.</text>
</comment>
<accession>A7IK06</accession>
<reference key="1">
    <citation type="submission" date="2007-07" db="EMBL/GenBank/DDBJ databases">
        <title>Complete sequence of chromosome of Xanthobacter autotrophicus Py2.</title>
        <authorList>
            <consortium name="US DOE Joint Genome Institute"/>
            <person name="Copeland A."/>
            <person name="Lucas S."/>
            <person name="Lapidus A."/>
            <person name="Barry K."/>
            <person name="Glavina del Rio T."/>
            <person name="Hammon N."/>
            <person name="Israni S."/>
            <person name="Dalin E."/>
            <person name="Tice H."/>
            <person name="Pitluck S."/>
            <person name="Sims D."/>
            <person name="Brettin T."/>
            <person name="Bruce D."/>
            <person name="Detter J.C."/>
            <person name="Han C."/>
            <person name="Tapia R."/>
            <person name="Brainard J."/>
            <person name="Schmutz J."/>
            <person name="Larimer F."/>
            <person name="Land M."/>
            <person name="Hauser L."/>
            <person name="Kyrpides N."/>
            <person name="Kim E."/>
            <person name="Ensigns S.A."/>
            <person name="Richardson P."/>
        </authorList>
    </citation>
    <scope>NUCLEOTIDE SEQUENCE [LARGE SCALE GENOMIC DNA]</scope>
    <source>
        <strain>ATCC BAA-1158 / Py2</strain>
    </source>
</reference>
<evidence type="ECO:0000255" key="1">
    <source>
        <dbReference type="HAMAP-Rule" id="MF_00270"/>
    </source>
</evidence>
<evidence type="ECO:0000256" key="2">
    <source>
        <dbReference type="SAM" id="MobiDB-lite"/>
    </source>
</evidence>
<evidence type="ECO:0000305" key="3"/>
<keyword id="KW-1185">Reference proteome</keyword>
<keyword id="KW-0687">Ribonucleoprotein</keyword>
<keyword id="KW-0689">Ribosomal protein</keyword>
<keyword id="KW-0694">RNA-binding</keyword>
<keyword id="KW-0699">rRNA-binding</keyword>
<feature type="chain" id="PRO_0000345561" description="Small ribosomal subunit protein bS18">
    <location>
        <begin position="1"/>
        <end position="88"/>
    </location>
</feature>
<feature type="region of interest" description="Disordered" evidence="2">
    <location>
        <begin position="1"/>
        <end position="26"/>
    </location>
</feature>
<name>RS18_XANP2</name>
<organism>
    <name type="scientific">Xanthobacter autotrophicus (strain ATCC BAA-1158 / Py2)</name>
    <dbReference type="NCBI Taxonomy" id="78245"/>
    <lineage>
        <taxon>Bacteria</taxon>
        <taxon>Pseudomonadati</taxon>
        <taxon>Pseudomonadota</taxon>
        <taxon>Alphaproteobacteria</taxon>
        <taxon>Hyphomicrobiales</taxon>
        <taxon>Xanthobacteraceae</taxon>
        <taxon>Xanthobacter</taxon>
    </lineage>
</organism>
<dbReference type="EMBL" id="CP000781">
    <property type="protein sequence ID" value="ABS68349.1"/>
    <property type="molecule type" value="Genomic_DNA"/>
</dbReference>
<dbReference type="SMR" id="A7IK06"/>
<dbReference type="STRING" id="78245.Xaut_3119"/>
<dbReference type="KEGG" id="xau:Xaut_3119"/>
<dbReference type="eggNOG" id="COG0238">
    <property type="taxonomic scope" value="Bacteria"/>
</dbReference>
<dbReference type="HOGENOM" id="CLU_148710_0_3_5"/>
<dbReference type="OrthoDB" id="9812008at2"/>
<dbReference type="PhylomeDB" id="A7IK06"/>
<dbReference type="Proteomes" id="UP000002417">
    <property type="component" value="Chromosome"/>
</dbReference>
<dbReference type="GO" id="GO:0022627">
    <property type="term" value="C:cytosolic small ribosomal subunit"/>
    <property type="evidence" value="ECO:0007669"/>
    <property type="project" value="TreeGrafter"/>
</dbReference>
<dbReference type="GO" id="GO:0070181">
    <property type="term" value="F:small ribosomal subunit rRNA binding"/>
    <property type="evidence" value="ECO:0007669"/>
    <property type="project" value="TreeGrafter"/>
</dbReference>
<dbReference type="GO" id="GO:0003735">
    <property type="term" value="F:structural constituent of ribosome"/>
    <property type="evidence" value="ECO:0007669"/>
    <property type="project" value="InterPro"/>
</dbReference>
<dbReference type="GO" id="GO:0006412">
    <property type="term" value="P:translation"/>
    <property type="evidence" value="ECO:0007669"/>
    <property type="project" value="UniProtKB-UniRule"/>
</dbReference>
<dbReference type="Gene3D" id="4.10.640.10">
    <property type="entry name" value="Ribosomal protein S18"/>
    <property type="match status" value="1"/>
</dbReference>
<dbReference type="HAMAP" id="MF_00270">
    <property type="entry name" value="Ribosomal_bS18"/>
    <property type="match status" value="1"/>
</dbReference>
<dbReference type="InterPro" id="IPR001648">
    <property type="entry name" value="Ribosomal_bS18"/>
</dbReference>
<dbReference type="InterPro" id="IPR018275">
    <property type="entry name" value="Ribosomal_bS18_CS"/>
</dbReference>
<dbReference type="InterPro" id="IPR036870">
    <property type="entry name" value="Ribosomal_bS18_sf"/>
</dbReference>
<dbReference type="NCBIfam" id="TIGR00165">
    <property type="entry name" value="S18"/>
    <property type="match status" value="1"/>
</dbReference>
<dbReference type="PANTHER" id="PTHR13479">
    <property type="entry name" value="30S RIBOSOMAL PROTEIN S18"/>
    <property type="match status" value="1"/>
</dbReference>
<dbReference type="PANTHER" id="PTHR13479:SF40">
    <property type="entry name" value="SMALL RIBOSOMAL SUBUNIT PROTEIN BS18M"/>
    <property type="match status" value="1"/>
</dbReference>
<dbReference type="Pfam" id="PF01084">
    <property type="entry name" value="Ribosomal_S18"/>
    <property type="match status" value="1"/>
</dbReference>
<dbReference type="PRINTS" id="PR00974">
    <property type="entry name" value="RIBOSOMALS18"/>
</dbReference>
<dbReference type="SUPFAM" id="SSF46911">
    <property type="entry name" value="Ribosomal protein S18"/>
    <property type="match status" value="1"/>
</dbReference>
<dbReference type="PROSITE" id="PS00057">
    <property type="entry name" value="RIBOSOMAL_S18"/>
    <property type="match status" value="1"/>
</dbReference>